<feature type="signal peptide" evidence="4">
    <location>
        <begin position="1"/>
        <end position="37"/>
    </location>
</feature>
<feature type="chain" id="PRO_0000008645" description="Neuroligin-3">
    <location>
        <begin position="38"/>
        <end position="848"/>
    </location>
</feature>
<feature type="topological domain" description="Extracellular" evidence="4">
    <location>
        <begin position="38"/>
        <end position="709"/>
    </location>
</feature>
<feature type="transmembrane region" description="Helical" evidence="4">
    <location>
        <begin position="710"/>
        <end position="730"/>
    </location>
</feature>
<feature type="topological domain" description="Cytoplasmic" evidence="4">
    <location>
        <begin position="731"/>
        <end position="848"/>
    </location>
</feature>
<feature type="region of interest" description="Disordered" evidence="5">
    <location>
        <begin position="170"/>
        <end position="195"/>
    </location>
</feature>
<feature type="region of interest" description="Disordered" evidence="5">
    <location>
        <begin position="645"/>
        <end position="694"/>
    </location>
</feature>
<feature type="compositionally biased region" description="Acidic residues" evidence="5">
    <location>
        <begin position="182"/>
        <end position="194"/>
    </location>
</feature>
<feature type="compositionally biased region" description="Polar residues" evidence="5">
    <location>
        <begin position="645"/>
        <end position="656"/>
    </location>
</feature>
<feature type="compositionally biased region" description="Polar residues" evidence="5">
    <location>
        <begin position="677"/>
        <end position="689"/>
    </location>
</feature>
<feature type="modified residue" description="Phosphoserine" evidence="2">
    <location>
        <position position="745"/>
    </location>
</feature>
<feature type="modified residue" description="Phosphotyrosine" evidence="3">
    <location>
        <position position="792"/>
    </location>
</feature>
<feature type="glycosylation site" description="N-linked (GlcNAc...) asparagine" evidence="4">
    <location>
        <position position="98"/>
    </location>
</feature>
<feature type="glycosylation site" description="N-linked (GlcNAc...) asparagine" evidence="4">
    <location>
        <position position="545"/>
    </location>
</feature>
<feature type="disulfide bond" evidence="1">
    <location>
        <begin position="106"/>
        <end position="141"/>
    </location>
</feature>
<feature type="disulfide bond" evidence="1">
    <location>
        <begin position="340"/>
        <end position="351"/>
    </location>
</feature>
<feature type="disulfide bond" evidence="1">
    <location>
        <begin position="510"/>
        <end position="544"/>
    </location>
</feature>
<feature type="splice variant" id="VSP_053827" description="In isoform 3." evidence="16">
    <location>
        <begin position="153"/>
        <end position="192"/>
    </location>
</feature>
<feature type="splice variant" id="VSP_007534" description="In isoform 2." evidence="12 13 14 15">
    <location>
        <begin position="153"/>
        <end position="172"/>
    </location>
</feature>
<feature type="sequence variant" id="VAR_068887" description="In dbSNP:rs17854698." evidence="8">
    <original>S</original>
    <variation>Y</variation>
    <location>
        <position position="92"/>
    </location>
</feature>
<feature type="sequence variant" id="VAR_015668" description="In AUTSX1." evidence="7">
    <original>R</original>
    <variation>C</variation>
    <location>
        <position position="451"/>
    </location>
</feature>
<feature type="sequence variant" id="VAR_068888" description="In dbSNP:rs17854697." evidence="8">
    <original>L</original>
    <variation>I</variation>
    <location>
        <position position="718"/>
    </location>
</feature>
<feature type="sequence variant" id="VAR_068889" description="In dbSNP:rs17857400." evidence="8">
    <original>G</original>
    <variation>W</variation>
    <location>
        <position position="751"/>
    </location>
</feature>
<feature type="sequence variant" id="VAR_068890" description="In dbSNP:rs17857401." evidence="8">
    <original>G</original>
    <variation>S</variation>
    <location>
        <position position="778"/>
    </location>
</feature>
<feature type="sequence conflict" description="In Ref. 1; AAF71230." evidence="16" ref="1">
    <original>L</original>
    <variation>P</variation>
    <location>
        <position position="224"/>
    </location>
</feature>
<feature type="sequence conflict" description="In Ref. 3; BAG37248." evidence="16" ref="3">
    <original>F</original>
    <variation>S</variation>
    <location>
        <position position="274"/>
    </location>
</feature>
<proteinExistence type="evidence at protein level"/>
<accession>Q9NZ94</accession>
<accession>B2RBK1</accession>
<accession>D2X2H6</accession>
<accession>D3DVV0</accession>
<accession>D3DVV1</accession>
<accession>Q86V51</accession>
<accession>Q8NCD0</accession>
<accession>Q9NZ95</accession>
<accession>Q9NZ96</accession>
<accession>Q9NZ97</accession>
<accession>Q9P248</accession>
<name>NLGN3_HUMAN</name>
<keyword id="KW-0002">3D-structure</keyword>
<keyword id="KW-0025">Alternative splicing</keyword>
<keyword id="KW-1270">Asperger syndrome</keyword>
<keyword id="KW-1269">Autism</keyword>
<keyword id="KW-1268">Autism spectrum disorder</keyword>
<keyword id="KW-0130">Cell adhesion</keyword>
<keyword id="KW-1003">Cell membrane</keyword>
<keyword id="KW-0225">Disease variant</keyword>
<keyword id="KW-1015">Disulfide bond</keyword>
<keyword id="KW-0325">Glycoprotein</keyword>
<keyword id="KW-0472">Membrane</keyword>
<keyword id="KW-0597">Phosphoprotein</keyword>
<keyword id="KW-1267">Proteomics identification</keyword>
<keyword id="KW-1185">Reference proteome</keyword>
<keyword id="KW-0732">Signal</keyword>
<keyword id="KW-0770">Synapse</keyword>
<keyword id="KW-0812">Transmembrane</keyword>
<keyword id="KW-1133">Transmembrane helix</keyword>
<gene>
    <name type="primary">NLGN3</name>
    <name type="synonym">KIAA1480</name>
    <name type="synonym">NL3</name>
</gene>
<protein>
    <recommendedName>
        <fullName>Neuroligin-3</fullName>
    </recommendedName>
    <alternativeName>
        <fullName>Gliotactin homolog</fullName>
    </alternativeName>
</protein>
<reference key="1">
    <citation type="journal article" date="2000" name="Gene">
        <title>The structure and expression of the human neuroligin-3 gene.</title>
        <authorList>
            <person name="Philibert R.A."/>
            <person name="Winfield S.L."/>
            <person name="Sandhu H.K."/>
            <person name="Martin B.M."/>
            <person name="Ginns E.I."/>
        </authorList>
    </citation>
    <scope>NUCLEOTIDE SEQUENCE [GENOMIC DNA / MRNA] (ISOFORMS 1 AND 2)</scope>
    <scope>TISSUE SPECIFICITY</scope>
</reference>
<reference key="2">
    <citation type="journal article" date="2010" name="Dev. Dyn.">
        <title>Characterization of the neuroligin gene family expression and evolution in zebrafish.</title>
        <authorList>
            <person name="Rissone A."/>
            <person name="Sangiorgio L."/>
            <person name="Monopoli M."/>
            <person name="Beltrame M."/>
            <person name="Zucchi I."/>
            <person name="Bussolino F."/>
            <person name="Arese M."/>
            <person name="Cotelli F."/>
        </authorList>
    </citation>
    <scope>NUCLEOTIDE SEQUENCE [MRNA] (ISOFORM 2)</scope>
</reference>
<reference key="3">
    <citation type="journal article" date="2004" name="Nat. Genet.">
        <title>Complete sequencing and characterization of 21,243 full-length human cDNAs.</title>
        <authorList>
            <person name="Ota T."/>
            <person name="Suzuki Y."/>
            <person name="Nishikawa T."/>
            <person name="Otsuki T."/>
            <person name="Sugiyama T."/>
            <person name="Irie R."/>
            <person name="Wakamatsu A."/>
            <person name="Hayashi K."/>
            <person name="Sato H."/>
            <person name="Nagai K."/>
            <person name="Kimura K."/>
            <person name="Makita H."/>
            <person name="Sekine M."/>
            <person name="Obayashi M."/>
            <person name="Nishi T."/>
            <person name="Shibahara T."/>
            <person name="Tanaka T."/>
            <person name="Ishii S."/>
            <person name="Yamamoto J."/>
            <person name="Saito K."/>
            <person name="Kawai Y."/>
            <person name="Isono Y."/>
            <person name="Nakamura Y."/>
            <person name="Nagahari K."/>
            <person name="Murakami K."/>
            <person name="Yasuda T."/>
            <person name="Iwayanagi T."/>
            <person name="Wagatsuma M."/>
            <person name="Shiratori A."/>
            <person name="Sudo H."/>
            <person name="Hosoiri T."/>
            <person name="Kaku Y."/>
            <person name="Kodaira H."/>
            <person name="Kondo H."/>
            <person name="Sugawara M."/>
            <person name="Takahashi M."/>
            <person name="Kanda K."/>
            <person name="Yokoi T."/>
            <person name="Furuya T."/>
            <person name="Kikkawa E."/>
            <person name="Omura Y."/>
            <person name="Abe K."/>
            <person name="Kamihara K."/>
            <person name="Katsuta N."/>
            <person name="Sato K."/>
            <person name="Tanikawa M."/>
            <person name="Yamazaki M."/>
            <person name="Ninomiya K."/>
            <person name="Ishibashi T."/>
            <person name="Yamashita H."/>
            <person name="Murakawa K."/>
            <person name="Fujimori K."/>
            <person name="Tanai H."/>
            <person name="Kimata M."/>
            <person name="Watanabe M."/>
            <person name="Hiraoka S."/>
            <person name="Chiba Y."/>
            <person name="Ishida S."/>
            <person name="Ono Y."/>
            <person name="Takiguchi S."/>
            <person name="Watanabe S."/>
            <person name="Yosida M."/>
            <person name="Hotuta T."/>
            <person name="Kusano J."/>
            <person name="Kanehori K."/>
            <person name="Takahashi-Fujii A."/>
            <person name="Hara H."/>
            <person name="Tanase T.-O."/>
            <person name="Nomura Y."/>
            <person name="Togiya S."/>
            <person name="Komai F."/>
            <person name="Hara R."/>
            <person name="Takeuchi K."/>
            <person name="Arita M."/>
            <person name="Imose N."/>
            <person name="Musashino K."/>
            <person name="Yuuki H."/>
            <person name="Oshima A."/>
            <person name="Sasaki N."/>
            <person name="Aotsuka S."/>
            <person name="Yoshikawa Y."/>
            <person name="Matsunawa H."/>
            <person name="Ichihara T."/>
            <person name="Shiohata N."/>
            <person name="Sano S."/>
            <person name="Moriya S."/>
            <person name="Momiyama H."/>
            <person name="Satoh N."/>
            <person name="Takami S."/>
            <person name="Terashima Y."/>
            <person name="Suzuki O."/>
            <person name="Nakagawa S."/>
            <person name="Senoh A."/>
            <person name="Mizoguchi H."/>
            <person name="Goto Y."/>
            <person name="Shimizu F."/>
            <person name="Wakebe H."/>
            <person name="Hishigaki H."/>
            <person name="Watanabe T."/>
            <person name="Sugiyama A."/>
            <person name="Takemoto M."/>
            <person name="Kawakami B."/>
            <person name="Yamazaki M."/>
            <person name="Watanabe K."/>
            <person name="Kumagai A."/>
            <person name="Itakura S."/>
            <person name="Fukuzumi Y."/>
            <person name="Fujimori Y."/>
            <person name="Komiyama M."/>
            <person name="Tashiro H."/>
            <person name="Tanigami A."/>
            <person name="Fujiwara T."/>
            <person name="Ono T."/>
            <person name="Yamada K."/>
            <person name="Fujii Y."/>
            <person name="Ozaki K."/>
            <person name="Hirao M."/>
            <person name="Ohmori Y."/>
            <person name="Kawabata A."/>
            <person name="Hikiji T."/>
            <person name="Kobatake N."/>
            <person name="Inagaki H."/>
            <person name="Ikema Y."/>
            <person name="Okamoto S."/>
            <person name="Okitani R."/>
            <person name="Kawakami T."/>
            <person name="Noguchi S."/>
            <person name="Itoh T."/>
            <person name="Shigeta K."/>
            <person name="Senba T."/>
            <person name="Matsumura K."/>
            <person name="Nakajima Y."/>
            <person name="Mizuno T."/>
            <person name="Morinaga M."/>
            <person name="Sasaki M."/>
            <person name="Togashi T."/>
            <person name="Oyama M."/>
            <person name="Hata H."/>
            <person name="Watanabe M."/>
            <person name="Komatsu T."/>
            <person name="Mizushima-Sugano J."/>
            <person name="Satoh T."/>
            <person name="Shirai Y."/>
            <person name="Takahashi Y."/>
            <person name="Nakagawa K."/>
            <person name="Okumura K."/>
            <person name="Nagase T."/>
            <person name="Nomura N."/>
            <person name="Kikuchi H."/>
            <person name="Masuho Y."/>
            <person name="Yamashita R."/>
            <person name="Nakai K."/>
            <person name="Yada T."/>
            <person name="Nakamura Y."/>
            <person name="Ohara O."/>
            <person name="Isogai T."/>
            <person name="Sugano S."/>
        </authorList>
    </citation>
    <scope>NUCLEOTIDE SEQUENCE [LARGE SCALE MRNA] (ISOFORM 2)</scope>
    <scope>NUCLEOTIDE SEQUENCE [LARGE SCALE MRNA] OF 410-848 (ISOFORM 1)</scope>
    <source>
        <tissue>Brain</tissue>
    </source>
</reference>
<reference key="4">
    <citation type="journal article" date="2005" name="Nature">
        <title>The DNA sequence of the human X chromosome.</title>
        <authorList>
            <person name="Ross M.T."/>
            <person name="Grafham D.V."/>
            <person name="Coffey A.J."/>
            <person name="Scherer S."/>
            <person name="McLay K."/>
            <person name="Muzny D."/>
            <person name="Platzer M."/>
            <person name="Howell G.R."/>
            <person name="Burrows C."/>
            <person name="Bird C.P."/>
            <person name="Frankish A."/>
            <person name="Lovell F.L."/>
            <person name="Howe K.L."/>
            <person name="Ashurst J.L."/>
            <person name="Fulton R.S."/>
            <person name="Sudbrak R."/>
            <person name="Wen G."/>
            <person name="Jones M.C."/>
            <person name="Hurles M.E."/>
            <person name="Andrews T.D."/>
            <person name="Scott C.E."/>
            <person name="Searle S."/>
            <person name="Ramser J."/>
            <person name="Whittaker A."/>
            <person name="Deadman R."/>
            <person name="Carter N.P."/>
            <person name="Hunt S.E."/>
            <person name="Chen R."/>
            <person name="Cree A."/>
            <person name="Gunaratne P."/>
            <person name="Havlak P."/>
            <person name="Hodgson A."/>
            <person name="Metzker M.L."/>
            <person name="Richards S."/>
            <person name="Scott G."/>
            <person name="Steffen D."/>
            <person name="Sodergren E."/>
            <person name="Wheeler D.A."/>
            <person name="Worley K.C."/>
            <person name="Ainscough R."/>
            <person name="Ambrose K.D."/>
            <person name="Ansari-Lari M.A."/>
            <person name="Aradhya S."/>
            <person name="Ashwell R.I."/>
            <person name="Babbage A.K."/>
            <person name="Bagguley C.L."/>
            <person name="Ballabio A."/>
            <person name="Banerjee R."/>
            <person name="Barker G.E."/>
            <person name="Barlow K.F."/>
            <person name="Barrett I.P."/>
            <person name="Bates K.N."/>
            <person name="Beare D.M."/>
            <person name="Beasley H."/>
            <person name="Beasley O."/>
            <person name="Beck A."/>
            <person name="Bethel G."/>
            <person name="Blechschmidt K."/>
            <person name="Brady N."/>
            <person name="Bray-Allen S."/>
            <person name="Bridgeman A.M."/>
            <person name="Brown A.J."/>
            <person name="Brown M.J."/>
            <person name="Bonnin D."/>
            <person name="Bruford E.A."/>
            <person name="Buhay C."/>
            <person name="Burch P."/>
            <person name="Burford D."/>
            <person name="Burgess J."/>
            <person name="Burrill W."/>
            <person name="Burton J."/>
            <person name="Bye J.M."/>
            <person name="Carder C."/>
            <person name="Carrel L."/>
            <person name="Chako J."/>
            <person name="Chapman J.C."/>
            <person name="Chavez D."/>
            <person name="Chen E."/>
            <person name="Chen G."/>
            <person name="Chen Y."/>
            <person name="Chen Z."/>
            <person name="Chinault C."/>
            <person name="Ciccodicola A."/>
            <person name="Clark S.Y."/>
            <person name="Clarke G."/>
            <person name="Clee C.M."/>
            <person name="Clegg S."/>
            <person name="Clerc-Blankenburg K."/>
            <person name="Clifford K."/>
            <person name="Cobley V."/>
            <person name="Cole C.G."/>
            <person name="Conquer J.S."/>
            <person name="Corby N."/>
            <person name="Connor R.E."/>
            <person name="David R."/>
            <person name="Davies J."/>
            <person name="Davis C."/>
            <person name="Davis J."/>
            <person name="Delgado O."/>
            <person name="Deshazo D."/>
            <person name="Dhami P."/>
            <person name="Ding Y."/>
            <person name="Dinh H."/>
            <person name="Dodsworth S."/>
            <person name="Draper H."/>
            <person name="Dugan-Rocha S."/>
            <person name="Dunham A."/>
            <person name="Dunn M."/>
            <person name="Durbin K.J."/>
            <person name="Dutta I."/>
            <person name="Eades T."/>
            <person name="Ellwood M."/>
            <person name="Emery-Cohen A."/>
            <person name="Errington H."/>
            <person name="Evans K.L."/>
            <person name="Faulkner L."/>
            <person name="Francis F."/>
            <person name="Frankland J."/>
            <person name="Fraser A.E."/>
            <person name="Galgoczy P."/>
            <person name="Gilbert J."/>
            <person name="Gill R."/>
            <person name="Gloeckner G."/>
            <person name="Gregory S.G."/>
            <person name="Gribble S."/>
            <person name="Griffiths C."/>
            <person name="Grocock R."/>
            <person name="Gu Y."/>
            <person name="Gwilliam R."/>
            <person name="Hamilton C."/>
            <person name="Hart E.A."/>
            <person name="Hawes A."/>
            <person name="Heath P.D."/>
            <person name="Heitmann K."/>
            <person name="Hennig S."/>
            <person name="Hernandez J."/>
            <person name="Hinzmann B."/>
            <person name="Ho S."/>
            <person name="Hoffs M."/>
            <person name="Howden P.J."/>
            <person name="Huckle E.J."/>
            <person name="Hume J."/>
            <person name="Hunt P.J."/>
            <person name="Hunt A.R."/>
            <person name="Isherwood J."/>
            <person name="Jacob L."/>
            <person name="Johnson D."/>
            <person name="Jones S."/>
            <person name="de Jong P.J."/>
            <person name="Joseph S.S."/>
            <person name="Keenan S."/>
            <person name="Kelly S."/>
            <person name="Kershaw J.K."/>
            <person name="Khan Z."/>
            <person name="Kioschis P."/>
            <person name="Klages S."/>
            <person name="Knights A.J."/>
            <person name="Kosiura A."/>
            <person name="Kovar-Smith C."/>
            <person name="Laird G.K."/>
            <person name="Langford C."/>
            <person name="Lawlor S."/>
            <person name="Leversha M."/>
            <person name="Lewis L."/>
            <person name="Liu W."/>
            <person name="Lloyd C."/>
            <person name="Lloyd D.M."/>
            <person name="Loulseged H."/>
            <person name="Loveland J.E."/>
            <person name="Lovell J.D."/>
            <person name="Lozado R."/>
            <person name="Lu J."/>
            <person name="Lyne R."/>
            <person name="Ma J."/>
            <person name="Maheshwari M."/>
            <person name="Matthews L.H."/>
            <person name="McDowall J."/>
            <person name="McLaren S."/>
            <person name="McMurray A."/>
            <person name="Meidl P."/>
            <person name="Meitinger T."/>
            <person name="Milne S."/>
            <person name="Miner G."/>
            <person name="Mistry S.L."/>
            <person name="Morgan M."/>
            <person name="Morris S."/>
            <person name="Mueller I."/>
            <person name="Mullikin J.C."/>
            <person name="Nguyen N."/>
            <person name="Nordsiek G."/>
            <person name="Nyakatura G."/>
            <person name="O'dell C.N."/>
            <person name="Okwuonu G."/>
            <person name="Palmer S."/>
            <person name="Pandian R."/>
            <person name="Parker D."/>
            <person name="Parrish J."/>
            <person name="Pasternak S."/>
            <person name="Patel D."/>
            <person name="Pearce A.V."/>
            <person name="Pearson D.M."/>
            <person name="Pelan S.E."/>
            <person name="Perez L."/>
            <person name="Porter K.M."/>
            <person name="Ramsey Y."/>
            <person name="Reichwald K."/>
            <person name="Rhodes S."/>
            <person name="Ridler K.A."/>
            <person name="Schlessinger D."/>
            <person name="Schueler M.G."/>
            <person name="Sehra H.K."/>
            <person name="Shaw-Smith C."/>
            <person name="Shen H."/>
            <person name="Sheridan E.M."/>
            <person name="Shownkeen R."/>
            <person name="Skuce C.D."/>
            <person name="Smith M.L."/>
            <person name="Sotheran E.C."/>
            <person name="Steingruber H.E."/>
            <person name="Steward C.A."/>
            <person name="Storey R."/>
            <person name="Swann R.M."/>
            <person name="Swarbreck D."/>
            <person name="Tabor P.E."/>
            <person name="Taudien S."/>
            <person name="Taylor T."/>
            <person name="Teague B."/>
            <person name="Thomas K."/>
            <person name="Thorpe A."/>
            <person name="Timms K."/>
            <person name="Tracey A."/>
            <person name="Trevanion S."/>
            <person name="Tromans A.C."/>
            <person name="d'Urso M."/>
            <person name="Verduzco D."/>
            <person name="Villasana D."/>
            <person name="Waldron L."/>
            <person name="Wall M."/>
            <person name="Wang Q."/>
            <person name="Warren J."/>
            <person name="Warry G.L."/>
            <person name="Wei X."/>
            <person name="West A."/>
            <person name="Whitehead S.L."/>
            <person name="Whiteley M.N."/>
            <person name="Wilkinson J.E."/>
            <person name="Willey D.L."/>
            <person name="Williams G."/>
            <person name="Williams L."/>
            <person name="Williamson A."/>
            <person name="Williamson H."/>
            <person name="Wilming L."/>
            <person name="Woodmansey R.L."/>
            <person name="Wray P.W."/>
            <person name="Yen J."/>
            <person name="Zhang J."/>
            <person name="Zhou J."/>
            <person name="Zoghbi H."/>
            <person name="Zorilla S."/>
            <person name="Buck D."/>
            <person name="Reinhardt R."/>
            <person name="Poustka A."/>
            <person name="Rosenthal A."/>
            <person name="Lehrach H."/>
            <person name="Meindl A."/>
            <person name="Minx P.J."/>
            <person name="Hillier L.W."/>
            <person name="Willard H.F."/>
            <person name="Wilson R.K."/>
            <person name="Waterston R.H."/>
            <person name="Rice C.M."/>
            <person name="Vaudin M."/>
            <person name="Coulson A."/>
            <person name="Nelson D.L."/>
            <person name="Weinstock G."/>
            <person name="Sulston J.E."/>
            <person name="Durbin R.M."/>
            <person name="Hubbard T."/>
            <person name="Gibbs R.A."/>
            <person name="Beck S."/>
            <person name="Rogers J."/>
            <person name="Bentley D.R."/>
        </authorList>
    </citation>
    <scope>NUCLEOTIDE SEQUENCE [LARGE SCALE GENOMIC DNA]</scope>
</reference>
<reference key="5">
    <citation type="submission" date="2005-09" db="EMBL/GenBank/DDBJ databases">
        <authorList>
            <person name="Mural R.J."/>
            <person name="Istrail S."/>
            <person name="Sutton G.G."/>
            <person name="Florea L."/>
            <person name="Halpern A.L."/>
            <person name="Mobarry C.M."/>
            <person name="Lippert R."/>
            <person name="Walenz B."/>
            <person name="Shatkay H."/>
            <person name="Dew I."/>
            <person name="Miller J.R."/>
            <person name="Flanigan M.J."/>
            <person name="Edwards N.J."/>
            <person name="Bolanos R."/>
            <person name="Fasulo D."/>
            <person name="Halldorsson B.V."/>
            <person name="Hannenhalli S."/>
            <person name="Turner R."/>
            <person name="Yooseph S."/>
            <person name="Lu F."/>
            <person name="Nusskern D.R."/>
            <person name="Shue B.C."/>
            <person name="Zheng X.H."/>
            <person name="Zhong F."/>
            <person name="Delcher A.L."/>
            <person name="Huson D.H."/>
            <person name="Kravitz S.A."/>
            <person name="Mouchard L."/>
            <person name="Reinert K."/>
            <person name="Remington K.A."/>
            <person name="Clark A.G."/>
            <person name="Waterman M.S."/>
            <person name="Eichler E.E."/>
            <person name="Adams M.D."/>
            <person name="Hunkapiller M.W."/>
            <person name="Myers E.W."/>
            <person name="Venter J.C."/>
        </authorList>
    </citation>
    <scope>NUCLEOTIDE SEQUENCE [LARGE SCALE GENOMIC DNA]</scope>
</reference>
<reference key="6">
    <citation type="journal article" date="2004" name="Genome Res.">
        <title>The status, quality, and expansion of the NIH full-length cDNA project: the Mammalian Gene Collection (MGC).</title>
        <authorList>
            <consortium name="The MGC Project Team"/>
        </authorList>
    </citation>
    <scope>NUCLEOTIDE SEQUENCE [LARGE SCALE MRNA] (ISOFORM 2)</scope>
    <scope>VARIANTS TYR-92; ILE-718; TRP-751 AND SER-778</scope>
    <source>
        <tissue>Brain</tissue>
    </source>
</reference>
<reference key="7">
    <citation type="journal article" date="2000" name="DNA Res.">
        <title>Prediction of the coding sequences of unidentified human genes. XVII. The complete sequences of 100 new cDNA clones from brain which code for large proteins in vitro.</title>
        <authorList>
            <person name="Nagase T."/>
            <person name="Kikuno R."/>
            <person name="Ishikawa K."/>
            <person name="Hirosawa M."/>
            <person name="Ohara O."/>
        </authorList>
    </citation>
    <scope>NUCLEOTIDE SEQUENCE [LARGE SCALE MRNA] OF 12-848</scope>
    <source>
        <tissue>Brain</tissue>
    </source>
</reference>
<reference key="8">
    <citation type="journal article" date="1997" name="Science">
        <title>Binding of neuroligins to PSD-95.</title>
        <authorList>
            <person name="Irie M."/>
            <person name="Hata Y."/>
            <person name="Takeuchi M."/>
            <person name="Ichtchenko K."/>
            <person name="Toyoda A."/>
            <person name="Hirao K."/>
            <person name="Takai Y."/>
            <person name="Rosahl T.W."/>
            <person name="Suedhof T.C."/>
        </authorList>
    </citation>
    <scope>INTERACTION WITH DLG4</scope>
</reference>
<reference key="9">
    <citation type="journal article" date="2004" name="Cell">
        <title>Neurexins induce differentiation of GABA and glutamate postsynaptic specializations via neuroligins.</title>
        <authorList>
            <person name="Graf E.R."/>
            <person name="Zhang X."/>
            <person name="Jin S.X."/>
            <person name="Linhoff M.W."/>
            <person name="Craig A.M."/>
        </authorList>
    </citation>
    <scope>FUNCTION</scope>
</reference>
<reference key="10">
    <citation type="journal article" date="2008" name="Endocrinology">
        <title>Expression of neurexin, neuroligin, and their cytoplasmic binding partners in the pancreatic beta-cells and the involvement of neuroligin in insulin secretion.</title>
        <authorList>
            <person name="Suckow A.T."/>
            <person name="Comoletti D."/>
            <person name="Waldrop M.A."/>
            <person name="Mosedale M."/>
            <person name="Egodage S."/>
            <person name="Taylor P."/>
            <person name="Chessler S.D."/>
        </authorList>
    </citation>
    <scope>TISSUE SPECIFICITY</scope>
    <scope>ALTERNATIVE SPLICING</scope>
</reference>
<reference key="11">
    <citation type="journal article" date="2009" name="Proc. Natl. Acad. Sci. U.S.A.">
        <title>The synaptic proteins neurexins and neuroligins are widely expressed in the vascular system and contribute to its functions.</title>
        <authorList>
            <person name="Bottos A."/>
            <person name="Destro E."/>
            <person name="Rissone A."/>
            <person name="Graziano S."/>
            <person name="Cordara G."/>
            <person name="Assenzio B."/>
            <person name="Cera M.R."/>
            <person name="Mascia L."/>
            <person name="Bussolino F."/>
            <person name="Arese M."/>
        </authorList>
    </citation>
    <scope>TISSUE SPECIFICITY</scope>
</reference>
<reference key="12">
    <citation type="journal article" date="2003" name="Nat. Genet.">
        <title>Mutations of the X-linked genes encoding neuroligins NLGN3 and NLGN4 are associated with autism.</title>
        <authorList>
            <person name="Jamain S."/>
            <person name="Quach H."/>
            <person name="Betancur C."/>
            <person name="Rastam M."/>
            <person name="Colineaux C."/>
            <person name="Gillberg I.C."/>
            <person name="Soderstrom H."/>
            <person name="Giros B."/>
            <person name="Leboyer M."/>
            <person name="Gillberg C."/>
            <person name="Bourgeron T."/>
            <person name="Nyden A."/>
            <person name="Philippe A."/>
            <person name="Cohen D."/>
            <person name="Chabane N."/>
            <person name="Mouren-Simeoni M.C."/>
            <person name="Brice A."/>
            <person name="Sponheim E."/>
            <person name="Spurkland I."/>
            <person name="Skjeldal O.H."/>
            <person name="Coleman M."/>
            <person name="Pearl P.L."/>
            <person name="Cohen I.L."/>
            <person name="Tsiouris J."/>
            <person name="Zappella M."/>
            <person name="Menchetti G."/>
            <person name="Pompella A."/>
            <person name="Aschauer H."/>
            <person name="Van Maldergem L."/>
        </authorList>
    </citation>
    <scope>VARIANT AUTSX1 CYS-451</scope>
</reference>
<evidence type="ECO:0000250" key="1"/>
<evidence type="ECO:0000250" key="2">
    <source>
        <dbReference type="UniProtKB" id="Q62889"/>
    </source>
</evidence>
<evidence type="ECO:0000250" key="3">
    <source>
        <dbReference type="UniProtKB" id="Q8BYM5"/>
    </source>
</evidence>
<evidence type="ECO:0000255" key="4"/>
<evidence type="ECO:0000256" key="5">
    <source>
        <dbReference type="SAM" id="MobiDB-lite"/>
    </source>
</evidence>
<evidence type="ECO:0000269" key="6">
    <source>
    </source>
</evidence>
<evidence type="ECO:0000269" key="7">
    <source>
    </source>
</evidence>
<evidence type="ECO:0000269" key="8">
    <source>
    </source>
</evidence>
<evidence type="ECO:0000269" key="9">
    <source>
    </source>
</evidence>
<evidence type="ECO:0000269" key="10">
    <source>
    </source>
</evidence>
<evidence type="ECO:0000269" key="11">
    <source>
    </source>
</evidence>
<evidence type="ECO:0000303" key="12">
    <source>
    </source>
</evidence>
<evidence type="ECO:0000303" key="13">
    <source>
    </source>
</evidence>
<evidence type="ECO:0000303" key="14">
    <source>
    </source>
</evidence>
<evidence type="ECO:0000303" key="15">
    <source>
    </source>
</evidence>
<evidence type="ECO:0000305" key="16"/>
<organism>
    <name type="scientific">Homo sapiens</name>
    <name type="common">Human</name>
    <dbReference type="NCBI Taxonomy" id="9606"/>
    <lineage>
        <taxon>Eukaryota</taxon>
        <taxon>Metazoa</taxon>
        <taxon>Chordata</taxon>
        <taxon>Craniata</taxon>
        <taxon>Vertebrata</taxon>
        <taxon>Euteleostomi</taxon>
        <taxon>Mammalia</taxon>
        <taxon>Eutheria</taxon>
        <taxon>Euarchontoglires</taxon>
        <taxon>Primates</taxon>
        <taxon>Haplorrhini</taxon>
        <taxon>Catarrhini</taxon>
        <taxon>Hominidae</taxon>
        <taxon>Homo</taxon>
    </lineage>
</organism>
<dbReference type="EMBL" id="AF217411">
    <property type="protein sequence ID" value="AAF71230.1"/>
    <property type="molecule type" value="mRNA"/>
</dbReference>
<dbReference type="EMBL" id="AF217412">
    <property type="protein sequence ID" value="AAF71231.1"/>
    <property type="status" value="ALT_SEQ"/>
    <property type="molecule type" value="mRNA"/>
</dbReference>
<dbReference type="EMBL" id="AF217413">
    <property type="protein sequence ID" value="AAF71232.1"/>
    <property type="molecule type" value="Genomic_DNA"/>
</dbReference>
<dbReference type="EMBL" id="AF217413">
    <property type="protein sequence ID" value="AAF71233.1"/>
    <property type="molecule type" value="Genomic_DNA"/>
</dbReference>
<dbReference type="EMBL" id="GQ489207">
    <property type="protein sequence ID" value="ADB12634.1"/>
    <property type="molecule type" value="mRNA"/>
</dbReference>
<dbReference type="EMBL" id="AK074814">
    <property type="protein sequence ID" value="BAC11226.1"/>
    <property type="status" value="ALT_INIT"/>
    <property type="molecule type" value="mRNA"/>
</dbReference>
<dbReference type="EMBL" id="AK314699">
    <property type="protein sequence ID" value="BAG37248.1"/>
    <property type="molecule type" value="mRNA"/>
</dbReference>
<dbReference type="EMBL" id="AL590764">
    <property type="status" value="NOT_ANNOTATED_CDS"/>
    <property type="molecule type" value="Genomic_DNA"/>
</dbReference>
<dbReference type="EMBL" id="CH471132">
    <property type="protein sequence ID" value="EAX05307.1"/>
    <property type="molecule type" value="Genomic_DNA"/>
</dbReference>
<dbReference type="EMBL" id="CH471132">
    <property type="protein sequence ID" value="EAX05308.1"/>
    <property type="molecule type" value="Genomic_DNA"/>
</dbReference>
<dbReference type="EMBL" id="CH471132">
    <property type="protein sequence ID" value="EAX05309.1"/>
    <property type="molecule type" value="Genomic_DNA"/>
</dbReference>
<dbReference type="EMBL" id="CH471132">
    <property type="protein sequence ID" value="EAX05310.1"/>
    <property type="molecule type" value="Genomic_DNA"/>
</dbReference>
<dbReference type="EMBL" id="CH471132">
    <property type="protein sequence ID" value="EAX05312.1"/>
    <property type="molecule type" value="Genomic_DNA"/>
</dbReference>
<dbReference type="EMBL" id="CH471132">
    <property type="protein sequence ID" value="EAX05313.1"/>
    <property type="molecule type" value="Genomic_DNA"/>
</dbReference>
<dbReference type="EMBL" id="BC051715">
    <property type="protein sequence ID" value="AAH51715.1"/>
    <property type="molecule type" value="mRNA"/>
</dbReference>
<dbReference type="EMBL" id="AB040913">
    <property type="protein sequence ID" value="BAA96004.1"/>
    <property type="status" value="ALT_INIT"/>
    <property type="molecule type" value="mRNA"/>
</dbReference>
<dbReference type="CCDS" id="CCDS14407.1">
    <molecule id="Q9NZ94-2"/>
</dbReference>
<dbReference type="CCDS" id="CCDS55441.1">
    <molecule id="Q9NZ94-1"/>
</dbReference>
<dbReference type="CCDS" id="CCDS55442.1">
    <molecule id="Q9NZ94-3"/>
</dbReference>
<dbReference type="RefSeq" id="NP_001160132.1">
    <molecule id="Q9NZ94-3"/>
    <property type="nucleotide sequence ID" value="NM_001166660.2"/>
</dbReference>
<dbReference type="RefSeq" id="NP_001308205.1">
    <property type="nucleotide sequence ID" value="NM_001321276.1"/>
</dbReference>
<dbReference type="RefSeq" id="NP_061850.2">
    <molecule id="Q9NZ94-2"/>
    <property type="nucleotide sequence ID" value="NM_018977.4"/>
</dbReference>
<dbReference type="RefSeq" id="NP_851820.1">
    <molecule id="Q9NZ94-1"/>
    <property type="nucleotide sequence ID" value="NM_181303.2"/>
</dbReference>
<dbReference type="RefSeq" id="XP_047298141.1">
    <molecule id="Q9NZ94-1"/>
    <property type="nucleotide sequence ID" value="XM_047442185.1"/>
</dbReference>
<dbReference type="RefSeq" id="XP_054183231.1">
    <molecule id="Q9NZ94-1"/>
    <property type="nucleotide sequence ID" value="XM_054327256.1"/>
</dbReference>
<dbReference type="PDB" id="8GS3">
    <property type="method" value="EM"/>
    <property type="resolution" value="3.90 A"/>
    <property type="chains" value="A/B=1-848"/>
</dbReference>
<dbReference type="PDBsum" id="8GS3"/>
<dbReference type="BMRB" id="Q9NZ94"/>
<dbReference type="EMDB" id="EMD-34219"/>
<dbReference type="SMR" id="Q9NZ94"/>
<dbReference type="BioGRID" id="119944">
    <property type="interactions" value="93"/>
</dbReference>
<dbReference type="FunCoup" id="Q9NZ94">
    <property type="interactions" value="329"/>
</dbReference>
<dbReference type="IntAct" id="Q9NZ94">
    <property type="interactions" value="83"/>
</dbReference>
<dbReference type="MINT" id="Q9NZ94"/>
<dbReference type="STRING" id="9606.ENSP00000351591"/>
<dbReference type="ESTHER" id="human-NLGN3">
    <property type="family name" value="Neuroligin"/>
</dbReference>
<dbReference type="MEROPS" id="S09.987"/>
<dbReference type="TCDB" id="8.A.117.1.6">
    <property type="family name" value="the neuroligin (nlg) family"/>
</dbReference>
<dbReference type="GlyCosmos" id="Q9NZ94">
    <property type="glycosylation" value="2 sites, No reported glycans"/>
</dbReference>
<dbReference type="GlyGen" id="Q9NZ94">
    <property type="glycosylation" value="3 sites"/>
</dbReference>
<dbReference type="iPTMnet" id="Q9NZ94"/>
<dbReference type="PhosphoSitePlus" id="Q9NZ94"/>
<dbReference type="BioMuta" id="NLGN3"/>
<dbReference type="DMDM" id="31076855"/>
<dbReference type="jPOST" id="Q9NZ94"/>
<dbReference type="MassIVE" id="Q9NZ94"/>
<dbReference type="PaxDb" id="9606-ENSP00000351591"/>
<dbReference type="PeptideAtlas" id="Q9NZ94"/>
<dbReference type="ProteomicsDB" id="12770"/>
<dbReference type="ProteomicsDB" id="83341">
    <molecule id="Q9NZ94-1"/>
</dbReference>
<dbReference type="ProteomicsDB" id="83342">
    <molecule id="Q9NZ94-2"/>
</dbReference>
<dbReference type="ABCD" id="Q9NZ94">
    <property type="antibodies" value="1 sequenced antibody"/>
</dbReference>
<dbReference type="Antibodypedia" id="561">
    <property type="antibodies" value="296 antibodies from 36 providers"/>
</dbReference>
<dbReference type="DNASU" id="54413"/>
<dbReference type="Ensembl" id="ENST00000358741.4">
    <molecule id="Q9NZ94-1"/>
    <property type="protein sequence ID" value="ENSP00000351591.4"/>
    <property type="gene ID" value="ENSG00000196338.15"/>
</dbReference>
<dbReference type="Ensembl" id="ENST00000374051.7">
    <molecule id="Q9NZ94-2"/>
    <property type="protein sequence ID" value="ENSP00000363163.3"/>
    <property type="gene ID" value="ENSG00000196338.15"/>
</dbReference>
<dbReference type="Ensembl" id="ENST00000536169.6">
    <molecule id="Q9NZ94-3"/>
    <property type="protein sequence ID" value="ENSP00000445298.1"/>
    <property type="gene ID" value="ENSG00000196338.15"/>
</dbReference>
<dbReference type="GeneID" id="54413"/>
<dbReference type="KEGG" id="hsa:54413"/>
<dbReference type="MANE-Select" id="ENST00000358741.4">
    <property type="protein sequence ID" value="ENSP00000351591.4"/>
    <property type="RefSeq nucleotide sequence ID" value="NM_181303.2"/>
    <property type="RefSeq protein sequence ID" value="NP_851820.1"/>
</dbReference>
<dbReference type="AGR" id="HGNC:14289"/>
<dbReference type="CTD" id="54413"/>
<dbReference type="DisGeNET" id="54413"/>
<dbReference type="GeneCards" id="NLGN3"/>
<dbReference type="HGNC" id="HGNC:14289">
    <property type="gene designation" value="NLGN3"/>
</dbReference>
<dbReference type="HPA" id="ENSG00000196338">
    <property type="expression patterns" value="Tissue enhanced (brain, seminal vesicle)"/>
</dbReference>
<dbReference type="MalaCards" id="NLGN3"/>
<dbReference type="MIM" id="300336">
    <property type="type" value="gene"/>
</dbReference>
<dbReference type="MIM" id="300425">
    <property type="type" value="phenotype"/>
</dbReference>
<dbReference type="neXtProt" id="NX_Q9NZ94"/>
<dbReference type="OpenTargets" id="ENSG00000196338"/>
<dbReference type="PharmGKB" id="PA31649"/>
<dbReference type="VEuPathDB" id="HostDB:ENSG00000196338"/>
<dbReference type="eggNOG" id="KOG1516">
    <property type="taxonomic scope" value="Eukaryota"/>
</dbReference>
<dbReference type="GeneTree" id="ENSGT00940000159580"/>
<dbReference type="HOGENOM" id="CLU_006586_5_1_1"/>
<dbReference type="InParanoid" id="Q9NZ94"/>
<dbReference type="OMA" id="MNCTIPE"/>
<dbReference type="OrthoDB" id="6846267at2759"/>
<dbReference type="PAN-GO" id="Q9NZ94">
    <property type="GO annotations" value="11 GO annotations based on evolutionary models"/>
</dbReference>
<dbReference type="PhylomeDB" id="Q9NZ94"/>
<dbReference type="TreeFam" id="TF326187"/>
<dbReference type="PathwayCommons" id="Q9NZ94"/>
<dbReference type="Reactome" id="R-HSA-6794361">
    <property type="pathway name" value="Neurexins and neuroligins"/>
</dbReference>
<dbReference type="SignaLink" id="Q9NZ94"/>
<dbReference type="SIGNOR" id="Q9NZ94"/>
<dbReference type="BioGRID-ORCS" id="54413">
    <property type="hits" value="14 hits in 773 CRISPR screens"/>
</dbReference>
<dbReference type="ChiTaRS" id="NLGN3">
    <property type="organism name" value="human"/>
</dbReference>
<dbReference type="GeneWiki" id="NLGN3"/>
<dbReference type="GenomeRNAi" id="54413"/>
<dbReference type="Pharos" id="Q9NZ94">
    <property type="development level" value="Tbio"/>
</dbReference>
<dbReference type="PRO" id="PR:Q9NZ94"/>
<dbReference type="Proteomes" id="UP000005640">
    <property type="component" value="Chromosome X"/>
</dbReference>
<dbReference type="RNAct" id="Q9NZ94">
    <property type="molecule type" value="protein"/>
</dbReference>
<dbReference type="Bgee" id="ENSG00000196338">
    <property type="expression patterns" value="Expressed in cortical plate and 138 other cell types or tissues"/>
</dbReference>
<dbReference type="ExpressionAtlas" id="Q9NZ94">
    <property type="expression patterns" value="baseline and differential"/>
</dbReference>
<dbReference type="GO" id="GO:0098985">
    <property type="term" value="C:asymmetric, glutamatergic, excitatory synapse"/>
    <property type="evidence" value="ECO:0000304"/>
    <property type="project" value="ARUK-UCL"/>
</dbReference>
<dbReference type="GO" id="GO:0009986">
    <property type="term" value="C:cell surface"/>
    <property type="evidence" value="ECO:0000314"/>
    <property type="project" value="UniProtKB"/>
</dbReference>
<dbReference type="GO" id="GO:0030139">
    <property type="term" value="C:endocytic vesicle"/>
    <property type="evidence" value="ECO:0000250"/>
    <property type="project" value="BHF-UCL"/>
</dbReference>
<dbReference type="GO" id="GO:0060076">
    <property type="term" value="C:excitatory synapse"/>
    <property type="evidence" value="ECO:0000314"/>
    <property type="project" value="BHF-UCL"/>
</dbReference>
<dbReference type="GO" id="GO:0016020">
    <property type="term" value="C:membrane"/>
    <property type="evidence" value="ECO:0000304"/>
    <property type="project" value="ARUK-UCL"/>
</dbReference>
<dbReference type="GO" id="GO:0005886">
    <property type="term" value="C:plasma membrane"/>
    <property type="evidence" value="ECO:0000318"/>
    <property type="project" value="GO_Central"/>
</dbReference>
<dbReference type="GO" id="GO:0045211">
    <property type="term" value="C:postsynaptic membrane"/>
    <property type="evidence" value="ECO:0000250"/>
    <property type="project" value="BHF-UCL"/>
</dbReference>
<dbReference type="GO" id="GO:0098793">
    <property type="term" value="C:presynapse"/>
    <property type="evidence" value="ECO:0007669"/>
    <property type="project" value="GOC"/>
</dbReference>
<dbReference type="GO" id="GO:0098983">
    <property type="term" value="C:symmetric, GABA-ergic, inhibitory synapse"/>
    <property type="evidence" value="ECO:0000304"/>
    <property type="project" value="ARUK-UCL"/>
</dbReference>
<dbReference type="GO" id="GO:0045202">
    <property type="term" value="C:synapse"/>
    <property type="evidence" value="ECO:0000250"/>
    <property type="project" value="UniProtKB"/>
</dbReference>
<dbReference type="GO" id="GO:0050839">
    <property type="term" value="F:cell adhesion molecule binding"/>
    <property type="evidence" value="ECO:0000250"/>
    <property type="project" value="BHF-UCL"/>
</dbReference>
<dbReference type="GO" id="GO:0042043">
    <property type="term" value="F:neurexin family protein binding"/>
    <property type="evidence" value="ECO:0000250"/>
    <property type="project" value="BHF-UCL"/>
</dbReference>
<dbReference type="GO" id="GO:0097110">
    <property type="term" value="F:scaffold protein binding"/>
    <property type="evidence" value="ECO:0000353"/>
    <property type="project" value="BHF-UCL"/>
</dbReference>
<dbReference type="GO" id="GO:0038023">
    <property type="term" value="F:signaling receptor activity"/>
    <property type="evidence" value="ECO:0000250"/>
    <property type="project" value="BHF-UCL"/>
</dbReference>
<dbReference type="GO" id="GO:0030534">
    <property type="term" value="P:adult behavior"/>
    <property type="evidence" value="ECO:0000315"/>
    <property type="project" value="BHF-UCL"/>
</dbReference>
<dbReference type="GO" id="GO:0048675">
    <property type="term" value="P:axon extension"/>
    <property type="evidence" value="ECO:0000250"/>
    <property type="project" value="BHF-UCL"/>
</dbReference>
<dbReference type="GO" id="GO:0007268">
    <property type="term" value="P:chemical synaptic transmission"/>
    <property type="evidence" value="ECO:0000318"/>
    <property type="project" value="GO_Central"/>
</dbReference>
<dbReference type="GO" id="GO:0060080">
    <property type="term" value="P:inhibitory postsynaptic potential"/>
    <property type="evidence" value="ECO:0000250"/>
    <property type="project" value="BHF-UCL"/>
</dbReference>
<dbReference type="GO" id="GO:0007612">
    <property type="term" value="P:learning"/>
    <property type="evidence" value="ECO:0000315"/>
    <property type="project" value="BHF-UCL"/>
</dbReference>
<dbReference type="GO" id="GO:0050804">
    <property type="term" value="P:modulation of chemical synaptic transmission"/>
    <property type="evidence" value="ECO:0000250"/>
    <property type="project" value="BHF-UCL"/>
</dbReference>
<dbReference type="GO" id="GO:0007158">
    <property type="term" value="P:neuron cell-cell adhesion"/>
    <property type="evidence" value="ECO:0000250"/>
    <property type="project" value="BHF-UCL"/>
</dbReference>
<dbReference type="GO" id="GO:2000463">
    <property type="term" value="P:positive regulation of excitatory postsynaptic potential"/>
    <property type="evidence" value="ECO:0000250"/>
    <property type="project" value="BHF-UCL"/>
</dbReference>
<dbReference type="GO" id="GO:1900451">
    <property type="term" value="P:positive regulation of glutamate receptor signaling pathway"/>
    <property type="evidence" value="ECO:0000250"/>
    <property type="project" value="BHF-UCL"/>
</dbReference>
<dbReference type="GO" id="GO:0051965">
    <property type="term" value="P:positive regulation of synapse assembly"/>
    <property type="evidence" value="ECO:0000250"/>
    <property type="project" value="BHF-UCL"/>
</dbReference>
<dbReference type="GO" id="GO:0051968">
    <property type="term" value="P:positive regulation of synaptic transmission, glutamatergic"/>
    <property type="evidence" value="ECO:0000250"/>
    <property type="project" value="BHF-UCL"/>
</dbReference>
<dbReference type="GO" id="GO:0097104">
    <property type="term" value="P:postsynaptic membrane assembly"/>
    <property type="evidence" value="ECO:0000250"/>
    <property type="project" value="BHF-UCL"/>
</dbReference>
<dbReference type="GO" id="GO:0099054">
    <property type="term" value="P:presynapse assembly"/>
    <property type="evidence" value="ECO:0000304"/>
    <property type="project" value="ARUK-UCL"/>
</dbReference>
<dbReference type="GO" id="GO:0097105">
    <property type="term" value="P:presynaptic membrane assembly"/>
    <property type="evidence" value="ECO:0000250"/>
    <property type="project" value="BHF-UCL"/>
</dbReference>
<dbReference type="GO" id="GO:0006898">
    <property type="term" value="P:receptor-mediated endocytosis"/>
    <property type="evidence" value="ECO:0000250"/>
    <property type="project" value="BHF-UCL"/>
</dbReference>
<dbReference type="GO" id="GO:0002087">
    <property type="term" value="P:regulation of respiratory gaseous exchange by nervous system process"/>
    <property type="evidence" value="ECO:0000250"/>
    <property type="project" value="BHF-UCL"/>
</dbReference>
<dbReference type="GO" id="GO:0060024">
    <property type="term" value="P:rhythmic synaptic transmission"/>
    <property type="evidence" value="ECO:0000250"/>
    <property type="project" value="BHF-UCL"/>
</dbReference>
<dbReference type="GO" id="GO:0035176">
    <property type="term" value="P:social behavior"/>
    <property type="evidence" value="ECO:0000315"/>
    <property type="project" value="UniProtKB"/>
</dbReference>
<dbReference type="GO" id="GO:0007416">
    <property type="term" value="P:synapse assembly"/>
    <property type="evidence" value="ECO:0000250"/>
    <property type="project" value="BHF-UCL"/>
</dbReference>
<dbReference type="GO" id="GO:0050808">
    <property type="term" value="P:synapse organization"/>
    <property type="evidence" value="ECO:0000315"/>
    <property type="project" value="UniProtKB"/>
</dbReference>
<dbReference type="GO" id="GO:0048488">
    <property type="term" value="P:synaptic vesicle endocytosis"/>
    <property type="evidence" value="ECO:0000318"/>
    <property type="project" value="GO_Central"/>
</dbReference>
<dbReference type="GO" id="GO:0071625">
    <property type="term" value="P:vocalization behavior"/>
    <property type="evidence" value="ECO:0000315"/>
    <property type="project" value="BHF-UCL"/>
</dbReference>
<dbReference type="DisProt" id="DP00553"/>
<dbReference type="FunFam" id="3.40.50.1820:FF:000001">
    <property type="entry name" value="Neuroligin 3 isoform"/>
    <property type="match status" value="1"/>
</dbReference>
<dbReference type="Gene3D" id="3.40.50.1820">
    <property type="entry name" value="alpha/beta hydrolase"/>
    <property type="match status" value="1"/>
</dbReference>
<dbReference type="InterPro" id="IPR029058">
    <property type="entry name" value="AB_hydrolase_fold"/>
</dbReference>
<dbReference type="InterPro" id="IPR002018">
    <property type="entry name" value="CarbesteraseB"/>
</dbReference>
<dbReference type="InterPro" id="IPR019819">
    <property type="entry name" value="Carboxylesterase_B_CS"/>
</dbReference>
<dbReference type="InterPro" id="IPR051093">
    <property type="entry name" value="Neuroligin/BSAL"/>
</dbReference>
<dbReference type="InterPro" id="IPR000460">
    <property type="entry name" value="Nlgn"/>
</dbReference>
<dbReference type="PANTHER" id="PTHR43903">
    <property type="entry name" value="NEUROLIGIN"/>
    <property type="match status" value="1"/>
</dbReference>
<dbReference type="Pfam" id="PF00135">
    <property type="entry name" value="COesterase"/>
    <property type="match status" value="1"/>
</dbReference>
<dbReference type="PRINTS" id="PR01090">
    <property type="entry name" value="NEUROLIGIN"/>
</dbReference>
<dbReference type="SUPFAM" id="SSF53474">
    <property type="entry name" value="alpha/beta-Hydrolases"/>
    <property type="match status" value="1"/>
</dbReference>
<dbReference type="PROSITE" id="PS00941">
    <property type="entry name" value="CARBOXYLESTERASE_B_2"/>
    <property type="match status" value="1"/>
</dbReference>
<comment type="function">
    <text evidence="1 9">Cell surface protein involved in cell-cell-interactions via its interactions with neurexin family members. Plays a role in synapse function and synaptic signal transmission, and may mediate its effects by clustering other synaptic proteins. May promote the initial formation of synapses, but is not essential for this. May also play a role in glia-glia or glia-neuron interactions in the developing peripheral nervous system (By similarity).</text>
</comment>
<comment type="subunit">
    <text evidence="2 3">Homodimer, and heterodimer with NLGN1 and NLGN2 (By similarity). Interacts with neurexins NRXN1, NRXN2 and NRXN3 (By similarity). Interaction with neurexins is mediated by heparan sulfate glycan modification on neurexin (By similarity). Interacts (via its C-terminus) with DLG4/PSD-95 (via PDZ domain 3) (By similarity).</text>
</comment>
<comment type="interaction">
    <interactant intactId="EBI-16423037">
        <id>Q9NZ94-2</id>
    </interactant>
    <interactant intactId="EBI-1052865">
        <id>P49753</id>
        <label>ACOT2</label>
    </interactant>
    <organismsDiffer>false</organismsDiffer>
    <experiments>2</experiments>
</comment>
<comment type="interaction">
    <interactant intactId="EBI-16423037">
        <id>Q9NZ94-2</id>
    </interactant>
    <interactant intactId="EBI-7183136">
        <id>P05108</id>
        <label>CYP11A1</label>
    </interactant>
    <organismsDiffer>false</organismsDiffer>
    <experiments>3</experiments>
</comment>
<comment type="interaction">
    <interactant intactId="EBI-16423037">
        <id>Q9NZ94-2</id>
    </interactant>
    <interactant intactId="EBI-352162">
        <id>P68104</id>
        <label>EEF1A1</label>
    </interactant>
    <organismsDiffer>false</organismsDiffer>
    <experiments>4</experiments>
</comment>
<comment type="interaction">
    <interactant intactId="EBI-16423037">
        <id>Q9NZ94-2</id>
    </interactant>
    <interactant intactId="EBI-2556412">
        <id>Q8IWB1</id>
        <label>ITPRIP</label>
    </interactant>
    <organismsDiffer>false</organismsDiffer>
    <experiments>5</experiments>
</comment>
<comment type="interaction">
    <interactant intactId="EBI-16423037">
        <id>Q9NZ94-2</id>
    </interactant>
    <interactant intactId="EBI-2105756">
        <id>P00403</id>
        <label>MT-CO2</label>
    </interactant>
    <organismsDiffer>false</organismsDiffer>
    <experiments>4</experiments>
</comment>
<comment type="interaction">
    <interactant intactId="EBI-16423037">
        <id>Q9NZ94-2</id>
    </interactant>
    <interactant intactId="EBI-739851">
        <id>Q15274</id>
        <label>QPRT</label>
    </interactant>
    <organismsDiffer>false</organismsDiffer>
    <experiments>4</experiments>
</comment>
<comment type="interaction">
    <interactant intactId="EBI-16423037">
        <id>Q9NZ94-2</id>
    </interactant>
    <interactant intactId="EBI-16424742">
        <id>Q86W33</id>
        <label>TPRA1</label>
    </interactant>
    <organismsDiffer>false</organismsDiffer>
    <experiments>3</experiments>
</comment>
<comment type="subcellular location">
    <subcellularLocation>
        <location evidence="1">Cell membrane</location>
        <topology evidence="1">Single-pass type I membrane protein</topology>
    </subcellularLocation>
    <subcellularLocation>
        <location evidence="1">Synapse</location>
    </subcellularLocation>
    <text evidence="1">Detected at both glutamatergic and GABAergic synapses.</text>
</comment>
<comment type="alternative products">
    <event type="alternative splicing"/>
    <isoform>
        <id>Q9NZ94-1</id>
        <name>1</name>
        <name>HNL3s</name>
        <sequence type="displayed"/>
    </isoform>
    <isoform>
        <id>Q9NZ94-2</id>
        <name>2</name>
        <name>HNL3</name>
        <sequence type="described" ref="VSP_007534"/>
    </isoform>
    <isoform>
        <id>Q9NZ94-3</id>
        <name>3</name>
        <sequence type="described" ref="VSP_053827"/>
    </isoform>
</comment>
<comment type="tissue specificity">
    <text evidence="6 10 11">Expressed in the blood vessel walls (at protein level). Detected in throughout the brain and in spinal cord. Detected in brain, and at lower levels in pancreas islet beta cells.</text>
</comment>
<comment type="disease" evidence="7">
    <disease id="DI-02431">
        <name>Autism, X-linked 1</name>
        <acronym>AUTSX1</acronym>
        <description>A complex multifactorial, pervasive developmental disorder characterized by impairments in reciprocal social interaction and communication, restricted and stereotyped patterns of interests and activities, and the presence of developmental abnormalities by 3 years of age. Most individuals with autism also manifest moderate intellectual disability.</description>
        <dbReference type="MIM" id="300425"/>
    </disease>
    <text>Disease susceptibility is associated with variants affecting the gene represented in this entry.</text>
</comment>
<comment type="similarity">
    <text evidence="16">Belongs to the type-B carboxylesterase/lipase family.</text>
</comment>
<comment type="sequence caution" evidence="16">
    <conflict type="miscellaneous discrepancy">
        <sequence resource="EMBL-CDS" id="AAF71231"/>
    </conflict>
    <text>Contaminating sequence. Potential poly-A sequence.</text>
</comment>
<comment type="sequence caution" evidence="16">
    <conflict type="erroneous initiation">
        <sequence resource="EMBL-CDS" id="BAA96004"/>
    </conflict>
</comment>
<comment type="sequence caution" evidence="16">
    <conflict type="erroneous initiation">
        <sequence resource="EMBL-CDS" id="BAC11226"/>
    </conflict>
</comment>
<sequence length="848" mass="93895">MWLRLGPPSLSLSPKPTVGRSLCLTLWFLSLALRASTQAPAPTVNTHFGKLRGARVPLPSEILGPVDQYLGVPYAAPPIGEKRFLPPEPPPSWSGIRNATHFPPVCPQNIHTAVPEVMLPVWFTANLDIVATYIQEPNEDCLYLNVYVPTEDVKRISKECARKPNKKICRKGGSGAKKQGEDLADNDGDEDEDIRDSGAKPVMVYIHGGSYMEGTGNMIDGSILASYGNVIVITLNYRVGVLGFLSTGDQAAKGNYGLLDQIQALRWVSENIAFFGGDPRRITVFGSGIGASCVSLLTLSHHSEGLFQRAIIQSGSALSSWAVNYQPVKYTSLLADKVGCNVLDTVDMVDCLRQKSAKELVEQDIQPARYHVAFGPVIDGDVIPDDPEILMEQGEFLNYDIMLGVNQGEGLKFVEGVVDPEDGVSGTDFDYSVSNFVDNLYGYPEGKDTLRETIKFMYTDWADRDNPETRRKTLVALFTDHQWVEPSVVTADLHARYGSPTYFYAFYHHCQSLMKPAWSDAAHGDEVPYVFGVPMVGPTDLFPCNFSKNDVMLSAVVMTYWTNFAKTGDPNKPVPQDTKFIHTKANRFEEVAWSKYNPRDQLYLHIGLKPRVRDHYRATKVAFWKHLVPHLYNLHDMFHYTSTTTKVPPPDTTHSSHITRRPNGKTWSTKRPAISPAYSNENAQGSWNGDQDAGPLLVENPRDYSTELSVTIAVGASLLFLNVLAFAALYYRKDKRRQEPLRQPSPQRGAGAPELGAAPEEELAALQLGPTHHECEAGPPHDTLRLTALPDYTLTLRRSPDDIPLMTPNTITMIPNSLVGLQTLHPYNTFAAGFNSTGLPHSHSTTRV</sequence>